<name>GCST_THEPX</name>
<evidence type="ECO:0000255" key="1">
    <source>
        <dbReference type="HAMAP-Rule" id="MF_00259"/>
    </source>
</evidence>
<feature type="chain" id="PRO_1000114123" description="Aminomethyltransferase">
    <location>
        <begin position="1"/>
        <end position="368"/>
    </location>
</feature>
<sequence length="368" mass="41899">MDNLKKTPLFELYKKYNGKIIDFAGWALPVQFESIISEHEAVRNAAGLFDVSHMGEITVKGREAFNFLQNLITNDLSKLKGNQVLYTFMCNYNGGVVDDLLVYKYSDEHFYLVVNAANIEKDYKWMKDNKGVYEVEIENISDEVAELAIQGPKAEEILQKLTDTDLSEIKFFCFKDNVKIAGIECLVSRTGYTGEDGFEIYMPNKYAVELWEKIVEVGKEYGLKPAGLGARDTLRFEAGLPLYGNELSEEITPLEAGFEFFVKFDKGNFIGKDALLKQKEEGLKRKIVGFEMIDNGIPRHGYEVRAHNQKIGYVTTGYFSPTLKKNIGLALIDSKYAQLGNQIEIVIRNKPLKALIISKNFYKKNYKK</sequence>
<protein>
    <recommendedName>
        <fullName evidence="1">Aminomethyltransferase</fullName>
        <ecNumber evidence="1">2.1.2.10</ecNumber>
    </recommendedName>
    <alternativeName>
        <fullName evidence="1">Glycine cleavage system T protein</fullName>
    </alternativeName>
</protein>
<gene>
    <name evidence="1" type="primary">gcvT</name>
    <name type="ordered locus">Teth514_0232</name>
</gene>
<comment type="function">
    <text evidence="1">The glycine cleavage system catalyzes the degradation of glycine.</text>
</comment>
<comment type="catalytic activity">
    <reaction evidence="1">
        <text>N(6)-[(R)-S(8)-aminomethyldihydrolipoyl]-L-lysyl-[protein] + (6S)-5,6,7,8-tetrahydrofolate = N(6)-[(R)-dihydrolipoyl]-L-lysyl-[protein] + (6R)-5,10-methylene-5,6,7,8-tetrahydrofolate + NH4(+)</text>
        <dbReference type="Rhea" id="RHEA:16945"/>
        <dbReference type="Rhea" id="RHEA-COMP:10475"/>
        <dbReference type="Rhea" id="RHEA-COMP:10492"/>
        <dbReference type="ChEBI" id="CHEBI:15636"/>
        <dbReference type="ChEBI" id="CHEBI:28938"/>
        <dbReference type="ChEBI" id="CHEBI:57453"/>
        <dbReference type="ChEBI" id="CHEBI:83100"/>
        <dbReference type="ChEBI" id="CHEBI:83143"/>
        <dbReference type="EC" id="2.1.2.10"/>
    </reaction>
</comment>
<comment type="subunit">
    <text evidence="1">The glycine cleavage system is composed of four proteins: P, T, L and H.</text>
</comment>
<comment type="similarity">
    <text evidence="1">Belongs to the GcvT family.</text>
</comment>
<reference key="1">
    <citation type="submission" date="2008-01" db="EMBL/GenBank/DDBJ databases">
        <title>Complete sequence of Thermoanaerobacter sp. X514.</title>
        <authorList>
            <consortium name="US DOE Joint Genome Institute"/>
            <person name="Copeland A."/>
            <person name="Lucas S."/>
            <person name="Lapidus A."/>
            <person name="Barry K."/>
            <person name="Glavina del Rio T."/>
            <person name="Dalin E."/>
            <person name="Tice H."/>
            <person name="Pitluck S."/>
            <person name="Bruce D."/>
            <person name="Goodwin L."/>
            <person name="Saunders E."/>
            <person name="Brettin T."/>
            <person name="Detter J.C."/>
            <person name="Han C."/>
            <person name="Schmutz J."/>
            <person name="Larimer F."/>
            <person name="Land M."/>
            <person name="Hauser L."/>
            <person name="Kyrpides N."/>
            <person name="Kim E."/>
            <person name="Hemme C."/>
            <person name="Fields M.W."/>
            <person name="He Z."/>
            <person name="Zhou J."/>
            <person name="Richardson P."/>
        </authorList>
    </citation>
    <scope>NUCLEOTIDE SEQUENCE [LARGE SCALE GENOMIC DNA]</scope>
    <source>
        <strain>X514</strain>
    </source>
</reference>
<accession>B0K242</accession>
<organism>
    <name type="scientific">Thermoanaerobacter sp. (strain X514)</name>
    <dbReference type="NCBI Taxonomy" id="399726"/>
    <lineage>
        <taxon>Bacteria</taxon>
        <taxon>Bacillati</taxon>
        <taxon>Bacillota</taxon>
        <taxon>Clostridia</taxon>
        <taxon>Thermoanaerobacterales</taxon>
        <taxon>Thermoanaerobacteraceae</taxon>
        <taxon>Thermoanaerobacter</taxon>
    </lineage>
</organism>
<keyword id="KW-0032">Aminotransferase</keyword>
<keyword id="KW-0808">Transferase</keyword>
<dbReference type="EC" id="2.1.2.10" evidence="1"/>
<dbReference type="EMBL" id="CP000923">
    <property type="protein sequence ID" value="ABY91550.1"/>
    <property type="molecule type" value="Genomic_DNA"/>
</dbReference>
<dbReference type="RefSeq" id="WP_006569280.1">
    <property type="nucleotide sequence ID" value="NC_010320.1"/>
</dbReference>
<dbReference type="SMR" id="B0K242"/>
<dbReference type="KEGG" id="tex:Teth514_0232"/>
<dbReference type="HOGENOM" id="CLU_007884_10_2_9"/>
<dbReference type="Proteomes" id="UP000002155">
    <property type="component" value="Chromosome"/>
</dbReference>
<dbReference type="GO" id="GO:0005829">
    <property type="term" value="C:cytosol"/>
    <property type="evidence" value="ECO:0007669"/>
    <property type="project" value="TreeGrafter"/>
</dbReference>
<dbReference type="GO" id="GO:0005960">
    <property type="term" value="C:glycine cleavage complex"/>
    <property type="evidence" value="ECO:0007669"/>
    <property type="project" value="InterPro"/>
</dbReference>
<dbReference type="GO" id="GO:0004047">
    <property type="term" value="F:aminomethyltransferase activity"/>
    <property type="evidence" value="ECO:0007669"/>
    <property type="project" value="UniProtKB-UniRule"/>
</dbReference>
<dbReference type="GO" id="GO:0008483">
    <property type="term" value="F:transaminase activity"/>
    <property type="evidence" value="ECO:0007669"/>
    <property type="project" value="UniProtKB-KW"/>
</dbReference>
<dbReference type="GO" id="GO:0019464">
    <property type="term" value="P:glycine decarboxylation via glycine cleavage system"/>
    <property type="evidence" value="ECO:0007669"/>
    <property type="project" value="UniProtKB-UniRule"/>
</dbReference>
<dbReference type="FunFam" id="2.40.30.110:FF:000003">
    <property type="entry name" value="Aminomethyltransferase"/>
    <property type="match status" value="1"/>
</dbReference>
<dbReference type="FunFam" id="3.30.70.1400:FF:000001">
    <property type="entry name" value="Aminomethyltransferase"/>
    <property type="match status" value="1"/>
</dbReference>
<dbReference type="FunFam" id="4.10.1250.10:FF:000001">
    <property type="entry name" value="Aminomethyltransferase"/>
    <property type="match status" value="1"/>
</dbReference>
<dbReference type="Gene3D" id="2.40.30.110">
    <property type="entry name" value="Aminomethyltransferase beta-barrel domains"/>
    <property type="match status" value="1"/>
</dbReference>
<dbReference type="Gene3D" id="3.30.70.1400">
    <property type="entry name" value="Aminomethyltransferase beta-barrel domains"/>
    <property type="match status" value="1"/>
</dbReference>
<dbReference type="Gene3D" id="4.10.1250.10">
    <property type="entry name" value="Aminomethyltransferase fragment"/>
    <property type="match status" value="1"/>
</dbReference>
<dbReference type="Gene3D" id="3.30.1360.120">
    <property type="entry name" value="Probable tRNA modification gtpase trme, domain 1"/>
    <property type="match status" value="1"/>
</dbReference>
<dbReference type="HAMAP" id="MF_00259">
    <property type="entry name" value="GcvT"/>
    <property type="match status" value="1"/>
</dbReference>
<dbReference type="InterPro" id="IPR006223">
    <property type="entry name" value="GCS_T"/>
</dbReference>
<dbReference type="InterPro" id="IPR022903">
    <property type="entry name" value="GCS_T_bac"/>
</dbReference>
<dbReference type="InterPro" id="IPR013977">
    <property type="entry name" value="GCST_C"/>
</dbReference>
<dbReference type="InterPro" id="IPR006222">
    <property type="entry name" value="GCV_T_N"/>
</dbReference>
<dbReference type="InterPro" id="IPR028896">
    <property type="entry name" value="GcvT/YgfZ/DmdA"/>
</dbReference>
<dbReference type="InterPro" id="IPR029043">
    <property type="entry name" value="GcvT/YgfZ_C"/>
</dbReference>
<dbReference type="InterPro" id="IPR027266">
    <property type="entry name" value="TrmE/GcvT_dom1"/>
</dbReference>
<dbReference type="NCBIfam" id="TIGR00528">
    <property type="entry name" value="gcvT"/>
    <property type="match status" value="1"/>
</dbReference>
<dbReference type="NCBIfam" id="NF001567">
    <property type="entry name" value="PRK00389.1"/>
    <property type="match status" value="1"/>
</dbReference>
<dbReference type="PANTHER" id="PTHR43757">
    <property type="entry name" value="AMINOMETHYLTRANSFERASE"/>
    <property type="match status" value="1"/>
</dbReference>
<dbReference type="PANTHER" id="PTHR43757:SF2">
    <property type="entry name" value="AMINOMETHYLTRANSFERASE, MITOCHONDRIAL"/>
    <property type="match status" value="1"/>
</dbReference>
<dbReference type="Pfam" id="PF01571">
    <property type="entry name" value="GCV_T"/>
    <property type="match status" value="1"/>
</dbReference>
<dbReference type="Pfam" id="PF08669">
    <property type="entry name" value="GCV_T_C"/>
    <property type="match status" value="1"/>
</dbReference>
<dbReference type="PIRSF" id="PIRSF006487">
    <property type="entry name" value="GcvT"/>
    <property type="match status" value="1"/>
</dbReference>
<dbReference type="SUPFAM" id="SSF101790">
    <property type="entry name" value="Aminomethyltransferase beta-barrel domain"/>
    <property type="match status" value="1"/>
</dbReference>
<dbReference type="SUPFAM" id="SSF103025">
    <property type="entry name" value="Folate-binding domain"/>
    <property type="match status" value="1"/>
</dbReference>
<proteinExistence type="inferred from homology"/>